<protein>
    <recommendedName>
        <fullName evidence="19">mRNA decay activator protein ZFP36L1</fullName>
    </recommendedName>
    <alternativeName>
        <fullName evidence="2">Butyrate response factor 1</fullName>
    </alternativeName>
    <alternativeName>
        <fullName evidence="18">TPA-induced sequence 11b</fullName>
    </alternativeName>
    <alternativeName>
        <fullName evidence="20">Zinc finger protein 36, C3H1 type-like 1</fullName>
        <shortName evidence="20">ZFP36-like 1</shortName>
    </alternativeName>
</protein>
<proteinExistence type="evidence at protein level"/>
<organism>
    <name type="scientific">Mus musculus</name>
    <name type="common">Mouse</name>
    <dbReference type="NCBI Taxonomy" id="10090"/>
    <lineage>
        <taxon>Eukaryota</taxon>
        <taxon>Metazoa</taxon>
        <taxon>Chordata</taxon>
        <taxon>Craniata</taxon>
        <taxon>Vertebrata</taxon>
        <taxon>Euteleostomi</taxon>
        <taxon>Mammalia</taxon>
        <taxon>Eutheria</taxon>
        <taxon>Euarchontoglires</taxon>
        <taxon>Glires</taxon>
        <taxon>Rodentia</taxon>
        <taxon>Myomorpha</taxon>
        <taxon>Muroidea</taxon>
        <taxon>Muridae</taxon>
        <taxon>Murinae</taxon>
        <taxon>Mus</taxon>
        <taxon>Mus</taxon>
    </lineage>
</organism>
<keyword id="KW-0963">Cytoplasm</keyword>
<keyword id="KW-0217">Developmental protein</keyword>
<keyword id="KW-0238">DNA-binding</keyword>
<keyword id="KW-0479">Metal-binding</keyword>
<keyword id="KW-0507">mRNA processing</keyword>
<keyword id="KW-0509">mRNA transport</keyword>
<keyword id="KW-0539">Nucleus</keyword>
<keyword id="KW-0597">Phosphoprotein</keyword>
<keyword id="KW-1185">Reference proteome</keyword>
<keyword id="KW-0677">Repeat</keyword>
<keyword id="KW-0687">Ribonucleoprotein</keyword>
<keyword id="KW-0694">RNA-binding</keyword>
<keyword id="KW-0813">Transport</keyword>
<keyword id="KW-0832">Ubl conjugation</keyword>
<keyword id="KW-0862">Zinc</keyword>
<keyword id="KW-0863">Zinc-finger</keyword>
<name>TISB_MOUSE</name>
<feature type="chain" id="PRO_0000089168" description="mRNA decay activator protein ZFP36L1">
    <location>
        <begin position="1"/>
        <end position="338"/>
    </location>
</feature>
<feature type="zinc finger region" description="C3H1-type 1" evidence="3">
    <location>
        <begin position="114"/>
        <end position="142"/>
    </location>
</feature>
<feature type="zinc finger region" description="C3H1-type 2" evidence="3">
    <location>
        <begin position="152"/>
        <end position="180"/>
    </location>
</feature>
<feature type="region of interest" description="Necessary and sufficient for the association with mRNA decay enzymes and mRNA decay activation" evidence="2">
    <location>
        <begin position="1"/>
        <end position="111"/>
    </location>
</feature>
<feature type="region of interest" description="Disordered" evidence="4">
    <location>
        <begin position="71"/>
        <end position="113"/>
    </location>
</feature>
<feature type="region of interest" description="Necessary for mRNA decay activation" evidence="2">
    <location>
        <begin position="185"/>
        <end position="338"/>
    </location>
</feature>
<feature type="region of interest" description="Disordered" evidence="4">
    <location>
        <begin position="273"/>
        <end position="338"/>
    </location>
</feature>
<feature type="compositionally biased region" description="Basic and acidic residues" evidence="4">
    <location>
        <begin position="82"/>
        <end position="96"/>
    </location>
</feature>
<feature type="compositionally biased region" description="Polar residues" evidence="4">
    <location>
        <begin position="101"/>
        <end position="113"/>
    </location>
</feature>
<feature type="compositionally biased region" description="Low complexity" evidence="4">
    <location>
        <begin position="305"/>
        <end position="318"/>
    </location>
</feature>
<feature type="modified residue" description="Phosphoserine; by MAPKAPK2" evidence="2">
    <location>
        <position position="54"/>
    </location>
</feature>
<feature type="modified residue" description="Phosphoserine; by PKB/AKT1" evidence="2">
    <location>
        <position position="90"/>
    </location>
</feature>
<feature type="modified residue" description="Phosphoserine; by PKB/AKT1 and MAPKAPK2" evidence="2">
    <location>
        <position position="92"/>
    </location>
</feature>
<feature type="modified residue" description="Phosphoserine; by PKB/AKT1 and MAPKAPK2" evidence="2">
    <location>
        <position position="203"/>
    </location>
</feature>
<feature type="modified residue" description="Phosphoserine" evidence="2">
    <location>
        <position position="318"/>
    </location>
</feature>
<feature type="modified residue" description="Phosphoserine; by RPS6KA1" evidence="2">
    <location>
        <position position="334"/>
    </location>
</feature>
<gene>
    <name evidence="20" type="primary">Zfp36l1</name>
    <name evidence="2" type="synonym">Brf1</name>
    <name evidence="18" type="synonym">Tis11b</name>
</gene>
<reference key="1">
    <citation type="journal article" date="1991" name="Mol. Cell. Biol.">
        <title>The TIS11 primary response gene is a member of a gene family that encodes proteins with a highly conserved sequence containing an unusual Cys-His repeat.</title>
        <authorList>
            <person name="Varnum B.C."/>
            <person name="Ma Q."/>
            <person name="Chi T."/>
            <person name="Fletcher B.S."/>
            <person name="Herschman H.R."/>
        </authorList>
    </citation>
    <scope>NUCLEOTIDE SEQUENCE [MRNA]</scope>
    <source>
        <strain>BALB/cJ</strain>
    </source>
</reference>
<reference key="2">
    <citation type="journal article" date="2002" name="J. Biol. Chem.">
        <title>Members of the tristetraprolin family of tandem CCCH zinc finger proteins exhibit CRM1-dependent nucleocytoplasmic shuttling.</title>
        <authorList>
            <person name="Phillips R.S."/>
            <person name="Ramos S.B."/>
            <person name="Blackshear P.J."/>
        </authorList>
    </citation>
    <scope>SUBCELLULAR LOCATION</scope>
</reference>
<reference key="3">
    <citation type="journal article" date="2004" name="Biochem. Biophys. Res. Commun.">
        <title>Butyrate response factor 1 is regulated by parathyroid hormone and bone morphogenetic protein-2 in osteoblastic cells.</title>
        <authorList>
            <person name="Reppe S."/>
            <person name="Olstad O.K."/>
            <person name="Rian E."/>
            <person name="Gautvik V.T."/>
            <person name="Gautvik K.M."/>
            <person name="Jemtland R."/>
        </authorList>
    </citation>
    <scope>TISSUE SPECIFICITY</scope>
    <scope>INDUCTION</scope>
</reference>
<reference key="4">
    <citation type="journal article" date="2004" name="Mol. Cell. Biol.">
        <title>Chorioallantoic fusion defects and embryonic lethality resulting from disruption of Zfp36L1, a gene encoding a CCCH tandem zinc finger protein of the Tristetraprolin family.</title>
        <authorList>
            <person name="Stumpo D.J."/>
            <person name="Byrd N.A."/>
            <person name="Phillips R.S."/>
            <person name="Ghosh S."/>
            <person name="Maronpot R.R."/>
            <person name="Castranio T."/>
            <person name="Meyers E.N."/>
            <person name="Mishina Y."/>
            <person name="Blackshear P.J."/>
        </authorList>
    </citation>
    <scope>FUNCTION</scope>
    <scope>TISSUE SPECIFICITY</scope>
    <scope>DEVELOPMENTAL STAGE</scope>
    <scope>DISRUPTION PHENOTYPE</scope>
</reference>
<reference key="5">
    <citation type="journal article" date="2006" name="Dev. Dyn.">
        <title>The RNA binding protein Zfp36l1 is required for normal vascularisation and post-transcriptionally regulates VEGF expression.</title>
        <authorList>
            <person name="Bell S.E."/>
            <person name="Sanchez M.J."/>
            <person name="Spasic-Boskovic O."/>
            <person name="Santalucia T."/>
            <person name="Gambardella L."/>
            <person name="Burton G.J."/>
            <person name="Murphy J.J."/>
            <person name="Norton J.D."/>
            <person name="Clark A.R."/>
            <person name="Turner M."/>
        </authorList>
    </citation>
    <scope>FUNCTION</scope>
    <scope>DISRUPTION PHENOTYPE</scope>
    <scope>DEVELOPMENTAL STAGE</scope>
</reference>
<reference key="6">
    <citation type="journal article" date="2008" name="Eur. J. Cell Biol.">
        <title>Strong induction of the Tis11B gene in myogenic differentiation.</title>
        <authorList>
            <person name="Busse M."/>
            <person name="Schwarzburger M."/>
            <person name="Berger F."/>
            <person name="Hacker C."/>
            <person name="Munz B."/>
        </authorList>
    </citation>
    <scope>FUNCTION</scope>
    <scope>INDUCTION</scope>
</reference>
<reference key="7">
    <citation type="journal article" date="2009" name="Mol. Endocrinol.">
        <title>cAMP-dependent posttranscriptional regulation of steroidogenic acute regulatory (STAR) protein by the zinc finger protein ZFP36L1/TIS11b.</title>
        <authorList>
            <person name="Duan H."/>
            <person name="Cherradi N."/>
            <person name="Feige J.J."/>
            <person name="Jefcoate C."/>
        </authorList>
    </citation>
    <scope>PHOSPHORYLATION</scope>
    <scope>INDUCTION</scope>
</reference>
<reference key="8">
    <citation type="journal article" date="2010" name="Nat. Immunol.">
        <title>Deletion of the RNA-binding proteins ZFP36L1 and ZFP36L2 leads to perturbed thymic development and T lymphoblastic leukemia.</title>
        <authorList>
            <person name="Hodson D.J."/>
            <person name="Janas M.L."/>
            <person name="Galloway A."/>
            <person name="Bell S.E."/>
            <person name="Andrews S."/>
            <person name="Li C.M."/>
            <person name="Pannell R."/>
            <person name="Siebel C.W."/>
            <person name="MacDonald H.R."/>
            <person name="De Keersmaecker K."/>
            <person name="Ferrando A.A."/>
            <person name="Grutz G."/>
            <person name="Turner M."/>
        </authorList>
    </citation>
    <scope>FUNCTION</scope>
    <scope>RNA-BINDING</scope>
    <scope>DISRUPTION PHENOTYPE</scope>
</reference>
<reference key="9">
    <citation type="journal article" date="2012" name="Int. J. Biol. Sci.">
        <title>Differential expression and functional analysis of the tristetraprolin family during early differentiation of 3T3-L1 preadipocytes.</title>
        <authorList>
            <person name="Lin N.Y."/>
            <person name="Lin T.Y."/>
            <person name="Yang W.H."/>
            <person name="Wang S.C."/>
            <person name="Wang K.T."/>
            <person name="Su Y.L."/>
            <person name="Jiang Y.W."/>
            <person name="Chang G.D."/>
            <person name="Chang C.J."/>
        </authorList>
    </citation>
    <scope>FUNCTION</scope>
    <scope>RNA-BINDING</scope>
    <scope>INTERACTION WITH YWHAZ</scope>
    <scope>PHOSPHORYLATION</scope>
    <scope>TISSUE SPECIFICITY</scope>
</reference>
<reference key="10">
    <citation type="journal article" date="2012" name="Skelet. Muscle">
        <title>A role for RNA post-transcriptional regulation in satellite cell activation.</title>
        <authorList>
            <person name="Farina N.H."/>
            <person name="Hausburg M."/>
            <person name="Betta N.D."/>
            <person name="Pulliam C."/>
            <person name="Srivastava D."/>
            <person name="Cornelison D."/>
            <person name="Olwin B.B."/>
        </authorList>
    </citation>
    <scope>INDUCTION</scope>
</reference>
<reference key="11">
    <citation type="journal article" date="2014" name="J. Am. Soc. Nephrol.">
        <title>Hypertonicity compromises renal mineralocorticoid receptor signaling through Tis11b-mediated post-transcriptional control.</title>
        <authorList>
            <person name="Viengchareun S."/>
            <person name="Lema I."/>
            <person name="Lamribet K."/>
            <person name="Keo V."/>
            <person name="Blanchard A."/>
            <person name="Cherradi N."/>
            <person name="Lombes M."/>
        </authorList>
    </citation>
    <scope>FUNCTION</scope>
    <scope>RNA-BINDING</scope>
    <scope>SUBCELLULAR LOCATION</scope>
    <scope>TISSUE SPECIFICITY</scope>
    <scope>INDUCTION</scope>
</reference>
<reference key="12">
    <citation type="journal article" date="2014" name="Proc. Natl. Acad. Sci. U.S.A.">
        <title>Brf1 posttranscriptionally regulates pluripotency and differentiation responses downstream of Erk MAP kinase.</title>
        <authorList>
            <person name="Tan F.E."/>
            <person name="Elowitz M.B."/>
        </authorList>
    </citation>
    <scope>FUNCTION</scope>
    <scope>RNA-BINDING</scope>
    <scope>SUBCELLULAR LOCATION</scope>
    <scope>TISSUE SPECIFICITY</scope>
    <scope>INDUCTION</scope>
</reference>
<reference key="13">
    <citation type="journal article" date="2015" name="Elife">
        <title>Post-transcriptional regulation of satellite cell quiescence by TTP-mediated mRNA decay.</title>
        <authorList>
            <person name="Hausburg M.A."/>
            <person name="Doles J.D."/>
            <person name="Clement S.L."/>
            <person name="Cadwallader A.B."/>
            <person name="Hall M.N."/>
            <person name="Blackshear P.J."/>
            <person name="Lykke-Andersen J."/>
            <person name="Olwin B.B."/>
        </authorList>
    </citation>
    <scope>INDUCTION</scope>
</reference>
<reference key="14">
    <citation type="journal article" date="2016" name="Science">
        <title>RNA-binding proteins ZFP36L1 and ZFP36L2 promote cell quiescence.</title>
        <authorList>
            <person name="Galloway A."/>
            <person name="Saveliev A."/>
            <person name="Lukasiak S."/>
            <person name="Hodson D.J."/>
            <person name="Bolland D."/>
            <person name="Balmanno K."/>
            <person name="Ahlfors H."/>
            <person name="Monzon-Casanova E."/>
            <person name="Mannurita S.C."/>
            <person name="Bell L.S."/>
            <person name="Andrews S."/>
            <person name="Diaz-Munoz M.D."/>
            <person name="Cook S.J."/>
            <person name="Corcoran A."/>
            <person name="Turner M."/>
        </authorList>
    </citation>
    <scope>FUNCTION</scope>
    <scope>DISRUPTION PHENOTYPE</scope>
    <scope>CONDITIONAL KNOCKOUT IN LYMPHOCYTE B CELLS</scope>
    <scope>TISSUE SPECIFICITY</scope>
</reference>
<accession>P23950</accession>
<sequence length="338" mass="36385">MTTTLVSATIFDLSEVLCKGNKMLNYSTPSAGGCLLDRKAVGTPAGGGFPRRHSVTLPSSKFHQNQLLSSLKGEPAPSLSSRDSRFRDRSFSEGGERLLPTQKQPGSGQVNSSRYKTELCRPFEENGACKYGDKCQFAHGIHELRSLTRHPKYKTELCRTFHTIGFCPYGPRCHFIHNAEERRALAGGRDLSADRPRLQHSFSFAGFPSAAATAAATGLLDSPTSITPPPILSADDLLGSPTLPDGTNNPFAFSSQELASLFAPSMGLPGGGSPTTFLFRPMSESPHMFDSPPSPQDSLSDHEGYLSSSSSSHSGSDSPTLDNSRRLPIFSRLSISDD</sequence>
<evidence type="ECO:0000250" key="1">
    <source>
        <dbReference type="UniProtKB" id="P17431"/>
    </source>
</evidence>
<evidence type="ECO:0000250" key="2">
    <source>
        <dbReference type="UniProtKB" id="Q07352"/>
    </source>
</evidence>
<evidence type="ECO:0000255" key="3">
    <source>
        <dbReference type="PROSITE-ProRule" id="PRU00723"/>
    </source>
</evidence>
<evidence type="ECO:0000256" key="4">
    <source>
        <dbReference type="SAM" id="MobiDB-lite"/>
    </source>
</evidence>
<evidence type="ECO:0000269" key="5">
    <source>
    </source>
</evidence>
<evidence type="ECO:0000269" key="6">
    <source>
    </source>
</evidence>
<evidence type="ECO:0000269" key="7">
    <source>
    </source>
</evidence>
<evidence type="ECO:0000269" key="8">
    <source>
    </source>
</evidence>
<evidence type="ECO:0000269" key="9">
    <source>
    </source>
</evidence>
<evidence type="ECO:0000269" key="10">
    <source>
    </source>
</evidence>
<evidence type="ECO:0000269" key="11">
    <source>
    </source>
</evidence>
<evidence type="ECO:0000269" key="12">
    <source>
    </source>
</evidence>
<evidence type="ECO:0000269" key="13">
    <source>
    </source>
</evidence>
<evidence type="ECO:0000269" key="14">
    <source>
    </source>
</evidence>
<evidence type="ECO:0000269" key="15">
    <source>
    </source>
</evidence>
<evidence type="ECO:0000269" key="16">
    <source>
    </source>
</evidence>
<evidence type="ECO:0000269" key="17">
    <source>
    </source>
</evidence>
<evidence type="ECO:0000303" key="18">
    <source>
    </source>
</evidence>
<evidence type="ECO:0000305" key="19"/>
<evidence type="ECO:0000312" key="20">
    <source>
        <dbReference type="MGI" id="MGI:107946"/>
    </source>
</evidence>
<dbReference type="EMBL" id="M58566">
    <property type="protein sequence ID" value="AAA72948.1"/>
    <property type="molecule type" value="mRNA"/>
</dbReference>
<dbReference type="CCDS" id="CCDS26010.1"/>
<dbReference type="PIR" id="B39590">
    <property type="entry name" value="B39590"/>
</dbReference>
<dbReference type="RefSeq" id="NP_031590.1">
    <property type="nucleotide sequence ID" value="NM_007564.5"/>
</dbReference>
<dbReference type="SMR" id="P23950"/>
<dbReference type="BioGRID" id="198385">
    <property type="interactions" value="1"/>
</dbReference>
<dbReference type="FunCoup" id="P23950">
    <property type="interactions" value="1565"/>
</dbReference>
<dbReference type="IntAct" id="P23950">
    <property type="interactions" value="2"/>
</dbReference>
<dbReference type="STRING" id="10090.ENSMUSP00000021552"/>
<dbReference type="iPTMnet" id="P23950"/>
<dbReference type="PhosphoSitePlus" id="P23950"/>
<dbReference type="jPOST" id="P23950"/>
<dbReference type="PaxDb" id="10090-ENSMUSP00000021552"/>
<dbReference type="PeptideAtlas" id="P23950"/>
<dbReference type="ProteomicsDB" id="259191"/>
<dbReference type="Pumba" id="P23950"/>
<dbReference type="Antibodypedia" id="37">
    <property type="antibodies" value="368 antibodies from 34 providers"/>
</dbReference>
<dbReference type="DNASU" id="12192"/>
<dbReference type="Ensembl" id="ENSMUST00000021552.3">
    <property type="protein sequence ID" value="ENSMUSP00000021552.2"/>
    <property type="gene ID" value="ENSMUSG00000021127.9"/>
</dbReference>
<dbReference type="GeneID" id="12192"/>
<dbReference type="KEGG" id="mmu:12192"/>
<dbReference type="UCSC" id="uc007oal.1">
    <property type="organism name" value="mouse"/>
</dbReference>
<dbReference type="AGR" id="MGI:107946"/>
<dbReference type="CTD" id="677"/>
<dbReference type="MGI" id="MGI:107946">
    <property type="gene designation" value="Zfp36l1"/>
</dbReference>
<dbReference type="VEuPathDB" id="HostDB:ENSMUSG00000021127"/>
<dbReference type="eggNOG" id="KOG1677">
    <property type="taxonomic scope" value="Eukaryota"/>
</dbReference>
<dbReference type="GeneTree" id="ENSGT00940000155076"/>
<dbReference type="HOGENOM" id="CLU_033040_1_0_1"/>
<dbReference type="InParanoid" id="P23950"/>
<dbReference type="OMA" id="YYFRPMS"/>
<dbReference type="OrthoDB" id="410307at2759"/>
<dbReference type="PhylomeDB" id="P23950"/>
<dbReference type="TreeFam" id="TF315463"/>
<dbReference type="Reactome" id="R-MMU-450385">
    <property type="pathway name" value="Butyrate Response Factor 1 (BRF1) binds and destabilizes mRNA"/>
</dbReference>
<dbReference type="BioGRID-ORCS" id="12192">
    <property type="hits" value="1 hit in 79 CRISPR screens"/>
</dbReference>
<dbReference type="ChiTaRS" id="Zfp36l1">
    <property type="organism name" value="mouse"/>
</dbReference>
<dbReference type="PRO" id="PR:P23950"/>
<dbReference type="Proteomes" id="UP000000589">
    <property type="component" value="Chromosome 12"/>
</dbReference>
<dbReference type="RNAct" id="P23950">
    <property type="molecule type" value="protein"/>
</dbReference>
<dbReference type="Bgee" id="ENSMUSG00000021127">
    <property type="expression patterns" value="Expressed in cerebellum ventricular layer and 237 other cell types or tissues"/>
</dbReference>
<dbReference type="ExpressionAtlas" id="P23950">
    <property type="expression patterns" value="baseline and differential"/>
</dbReference>
<dbReference type="GO" id="GO:0005737">
    <property type="term" value="C:cytoplasm"/>
    <property type="evidence" value="ECO:0000314"/>
    <property type="project" value="UniProtKB"/>
</dbReference>
<dbReference type="GO" id="GO:0005829">
    <property type="term" value="C:cytosol"/>
    <property type="evidence" value="ECO:0000266"/>
    <property type="project" value="MGI"/>
</dbReference>
<dbReference type="GO" id="GO:0005634">
    <property type="term" value="C:nucleus"/>
    <property type="evidence" value="ECO:0000314"/>
    <property type="project" value="MGI"/>
</dbReference>
<dbReference type="GO" id="GO:0000932">
    <property type="term" value="C:P-body"/>
    <property type="evidence" value="ECO:0000250"/>
    <property type="project" value="UniProtKB"/>
</dbReference>
<dbReference type="GO" id="GO:1990904">
    <property type="term" value="C:ribonucleoprotein complex"/>
    <property type="evidence" value="ECO:0000314"/>
    <property type="project" value="UniProtKB"/>
</dbReference>
<dbReference type="GO" id="GO:0071889">
    <property type="term" value="F:14-3-3 protein binding"/>
    <property type="evidence" value="ECO:0000250"/>
    <property type="project" value="UniProtKB"/>
</dbReference>
<dbReference type="GO" id="GO:0003677">
    <property type="term" value="F:DNA binding"/>
    <property type="evidence" value="ECO:0007669"/>
    <property type="project" value="UniProtKB-KW"/>
</dbReference>
<dbReference type="GO" id="GO:0035925">
    <property type="term" value="F:mRNA 3'-UTR AU-rich region binding"/>
    <property type="evidence" value="ECO:0000314"/>
    <property type="project" value="UniProtKB"/>
</dbReference>
<dbReference type="GO" id="GO:0003729">
    <property type="term" value="F:mRNA binding"/>
    <property type="evidence" value="ECO:0000314"/>
    <property type="project" value="UniProtKB"/>
</dbReference>
<dbReference type="GO" id="GO:0008270">
    <property type="term" value="F:zinc ion binding"/>
    <property type="evidence" value="ECO:0007669"/>
    <property type="project" value="UniProtKB-KW"/>
</dbReference>
<dbReference type="GO" id="GO:0061158">
    <property type="term" value="P:3'-UTR-mediated mRNA destabilization"/>
    <property type="evidence" value="ECO:0000314"/>
    <property type="project" value="UniProtKB"/>
</dbReference>
<dbReference type="GO" id="GO:0006915">
    <property type="term" value="P:apoptotic process"/>
    <property type="evidence" value="ECO:0000315"/>
    <property type="project" value="MGI"/>
</dbReference>
<dbReference type="GO" id="GO:0008283">
    <property type="term" value="P:cell population proliferation"/>
    <property type="evidence" value="ECO:0000315"/>
    <property type="project" value="MGI"/>
</dbReference>
<dbReference type="GO" id="GO:0071320">
    <property type="term" value="P:cellular response to cAMP"/>
    <property type="evidence" value="ECO:0000314"/>
    <property type="project" value="UniProtKB"/>
</dbReference>
<dbReference type="GO" id="GO:0071364">
    <property type="term" value="P:cellular response to epidermal growth factor stimulus"/>
    <property type="evidence" value="ECO:0000250"/>
    <property type="project" value="UniProtKB"/>
</dbReference>
<dbReference type="GO" id="GO:0044344">
    <property type="term" value="P:cellular response to fibroblast growth factor stimulus"/>
    <property type="evidence" value="ECO:0000314"/>
    <property type="project" value="UniProtKB"/>
</dbReference>
<dbReference type="GO" id="GO:0071385">
    <property type="term" value="P:cellular response to glucocorticoid stimulus"/>
    <property type="evidence" value="ECO:0000250"/>
    <property type="project" value="UniProtKB"/>
</dbReference>
<dbReference type="GO" id="GO:0071456">
    <property type="term" value="P:cellular response to hypoxia"/>
    <property type="evidence" value="ECO:0000250"/>
    <property type="project" value="UniProtKB"/>
</dbReference>
<dbReference type="GO" id="GO:0032869">
    <property type="term" value="P:cellular response to insulin stimulus"/>
    <property type="evidence" value="ECO:0000250"/>
    <property type="project" value="UniProtKB"/>
</dbReference>
<dbReference type="GO" id="GO:0071375">
    <property type="term" value="P:cellular response to peptide hormone stimulus"/>
    <property type="evidence" value="ECO:0000314"/>
    <property type="project" value="UniProtKB"/>
</dbReference>
<dbReference type="GO" id="GO:0097403">
    <property type="term" value="P:cellular response to raffinose"/>
    <property type="evidence" value="ECO:0000314"/>
    <property type="project" value="UniProtKB"/>
</dbReference>
<dbReference type="GO" id="GO:0071472">
    <property type="term" value="P:cellular response to salt stress"/>
    <property type="evidence" value="ECO:0000314"/>
    <property type="project" value="UniProtKB"/>
</dbReference>
<dbReference type="GO" id="GO:0071560">
    <property type="term" value="P:cellular response to transforming growth factor beta stimulus"/>
    <property type="evidence" value="ECO:0000250"/>
    <property type="project" value="UniProtKB"/>
</dbReference>
<dbReference type="GO" id="GO:0071356">
    <property type="term" value="P:cellular response to tumor necrosis factor"/>
    <property type="evidence" value="ECO:0000250"/>
    <property type="project" value="UniProtKB"/>
</dbReference>
<dbReference type="GO" id="GO:0060710">
    <property type="term" value="P:chorio-allantoic fusion"/>
    <property type="evidence" value="ECO:0000315"/>
    <property type="project" value="MGI"/>
</dbReference>
<dbReference type="GO" id="GO:0048568">
    <property type="term" value="P:embryonic organ development"/>
    <property type="evidence" value="ECO:0000315"/>
    <property type="project" value="MGI"/>
</dbReference>
<dbReference type="GO" id="GO:0070371">
    <property type="term" value="P:ERK1 and ERK2 cascade"/>
    <property type="evidence" value="ECO:0000250"/>
    <property type="project" value="UniProtKB"/>
</dbReference>
<dbReference type="GO" id="GO:0007507">
    <property type="term" value="P:heart development"/>
    <property type="evidence" value="ECO:0000315"/>
    <property type="project" value="MGI"/>
</dbReference>
<dbReference type="GO" id="GO:0000165">
    <property type="term" value="P:MAPK cascade"/>
    <property type="evidence" value="ECO:0000314"/>
    <property type="project" value="UniProtKB"/>
</dbReference>
<dbReference type="GO" id="GO:0048382">
    <property type="term" value="P:mesendoderm development"/>
    <property type="evidence" value="ECO:0000314"/>
    <property type="project" value="UniProtKB"/>
</dbReference>
<dbReference type="GO" id="GO:0006402">
    <property type="term" value="P:mRNA catabolic process"/>
    <property type="evidence" value="ECO:0000266"/>
    <property type="project" value="MGI"/>
</dbReference>
<dbReference type="GO" id="GO:0006397">
    <property type="term" value="P:mRNA processing"/>
    <property type="evidence" value="ECO:0007669"/>
    <property type="project" value="UniProtKB-KW"/>
</dbReference>
<dbReference type="GO" id="GO:0051028">
    <property type="term" value="P:mRNA transport"/>
    <property type="evidence" value="ECO:0000250"/>
    <property type="project" value="UniProtKB"/>
</dbReference>
<dbReference type="GO" id="GO:0035264">
    <property type="term" value="P:multicellular organism growth"/>
    <property type="evidence" value="ECO:0000315"/>
    <property type="project" value="MGI"/>
</dbReference>
<dbReference type="GO" id="GO:0045647">
    <property type="term" value="P:negative regulation of erythrocyte differentiation"/>
    <property type="evidence" value="ECO:0000250"/>
    <property type="project" value="UniProtKB"/>
</dbReference>
<dbReference type="GO" id="GO:1901991">
    <property type="term" value="P:negative regulation of mitotic cell cycle phase transition"/>
    <property type="evidence" value="ECO:0000315"/>
    <property type="project" value="UniProtKB"/>
</dbReference>
<dbReference type="GO" id="GO:0021915">
    <property type="term" value="P:neural tube development"/>
    <property type="evidence" value="ECO:0000315"/>
    <property type="project" value="MGI"/>
</dbReference>
<dbReference type="GO" id="GO:0000288">
    <property type="term" value="P:nuclear-transcribed mRNA catabolic process, deadenylation-dependent decay"/>
    <property type="evidence" value="ECO:0000314"/>
    <property type="project" value="MGI"/>
</dbReference>
<dbReference type="GO" id="GO:0031086">
    <property type="term" value="P:nuclear-transcribed mRNA catabolic process, deadenylation-independent decay"/>
    <property type="evidence" value="ECO:0000250"/>
    <property type="project" value="UniProtKB"/>
</dbReference>
<dbReference type="GO" id="GO:0038066">
    <property type="term" value="P:p38MAPK cascade"/>
    <property type="evidence" value="ECO:0000314"/>
    <property type="project" value="UniProtKB"/>
</dbReference>
<dbReference type="GO" id="GO:0043491">
    <property type="term" value="P:phosphatidylinositol 3-kinase/protein kinase B signal transduction"/>
    <property type="evidence" value="ECO:0000250"/>
    <property type="project" value="UniProtKB"/>
</dbReference>
<dbReference type="GO" id="GO:0045600">
    <property type="term" value="P:positive regulation of fat cell differentiation"/>
    <property type="evidence" value="ECO:0000314"/>
    <property type="project" value="UniProtKB"/>
</dbReference>
<dbReference type="GO" id="GO:1904582">
    <property type="term" value="P:positive regulation of intracellular mRNA localization"/>
    <property type="evidence" value="ECO:0000250"/>
    <property type="project" value="UniProtKB"/>
</dbReference>
<dbReference type="GO" id="GO:0045657">
    <property type="term" value="P:positive regulation of monocyte differentiation"/>
    <property type="evidence" value="ECO:0000250"/>
    <property type="project" value="UniProtKB"/>
</dbReference>
<dbReference type="GO" id="GO:1900153">
    <property type="term" value="P:positive regulation of nuclear-transcribed mRNA catabolic process, deadenylation-dependent decay"/>
    <property type="evidence" value="ECO:0000250"/>
    <property type="project" value="UniProtKB"/>
</dbReference>
<dbReference type="GO" id="GO:0003342">
    <property type="term" value="P:proepicardium development"/>
    <property type="evidence" value="ECO:0000315"/>
    <property type="project" value="MGI"/>
</dbReference>
<dbReference type="GO" id="GO:0045577">
    <property type="term" value="P:regulation of B cell differentiation"/>
    <property type="evidence" value="ECO:0000315"/>
    <property type="project" value="UniProtKB"/>
</dbReference>
<dbReference type="GO" id="GO:0010468">
    <property type="term" value="P:regulation of gene expression"/>
    <property type="evidence" value="ECO:0000250"/>
    <property type="project" value="UniProtKB"/>
</dbReference>
<dbReference type="GO" id="GO:1902172">
    <property type="term" value="P:regulation of keratinocyte apoptotic process"/>
    <property type="evidence" value="ECO:0000250"/>
    <property type="project" value="UniProtKB"/>
</dbReference>
<dbReference type="GO" id="GO:0045616">
    <property type="term" value="P:regulation of keratinocyte differentiation"/>
    <property type="evidence" value="ECO:0000250"/>
    <property type="project" value="UniProtKB"/>
</dbReference>
<dbReference type="GO" id="GO:0010837">
    <property type="term" value="P:regulation of keratinocyte proliferation"/>
    <property type="evidence" value="ECO:0000250"/>
    <property type="project" value="UniProtKB"/>
</dbReference>
<dbReference type="GO" id="GO:0031440">
    <property type="term" value="P:regulation of mRNA 3'-end processing"/>
    <property type="evidence" value="ECO:0007669"/>
    <property type="project" value="Ensembl"/>
</dbReference>
<dbReference type="GO" id="GO:0043488">
    <property type="term" value="P:regulation of mRNA stability"/>
    <property type="evidence" value="ECO:0000314"/>
    <property type="project" value="UniProtKB"/>
</dbReference>
<dbReference type="GO" id="GO:0045661">
    <property type="term" value="P:regulation of myoblast differentiation"/>
    <property type="evidence" value="ECO:0000315"/>
    <property type="project" value="UniProtKB"/>
</dbReference>
<dbReference type="GO" id="GO:0072091">
    <property type="term" value="P:regulation of stem cell proliferation"/>
    <property type="evidence" value="ECO:0000314"/>
    <property type="project" value="UniProtKB"/>
</dbReference>
<dbReference type="GO" id="GO:0006417">
    <property type="term" value="P:regulation of translation"/>
    <property type="evidence" value="ECO:0000315"/>
    <property type="project" value="MGI"/>
</dbReference>
<dbReference type="GO" id="GO:0009611">
    <property type="term" value="P:response to wounding"/>
    <property type="evidence" value="ECO:0000250"/>
    <property type="project" value="UniProtKB"/>
</dbReference>
<dbReference type="GO" id="GO:0060712">
    <property type="term" value="P:spongiotrophoblast layer development"/>
    <property type="evidence" value="ECO:0000315"/>
    <property type="project" value="MGI"/>
</dbReference>
<dbReference type="GO" id="GO:0033077">
    <property type="term" value="P:T cell differentiation in thymus"/>
    <property type="evidence" value="ECO:0000315"/>
    <property type="project" value="UniProtKB"/>
</dbReference>
<dbReference type="GO" id="GO:0001570">
    <property type="term" value="P:vasculogenesis"/>
    <property type="evidence" value="ECO:0000315"/>
    <property type="project" value="MGI"/>
</dbReference>
<dbReference type="FunFam" id="4.10.1000.10:FF:000001">
    <property type="entry name" value="zinc finger CCCH domain-containing protein 15-like"/>
    <property type="match status" value="1"/>
</dbReference>
<dbReference type="FunFam" id="4.10.1000.10:FF:000002">
    <property type="entry name" value="Zinc finger protein 36, C3H1 type-like 1"/>
    <property type="match status" value="1"/>
</dbReference>
<dbReference type="Gene3D" id="4.10.1000.10">
    <property type="entry name" value="Zinc finger, CCCH-type"/>
    <property type="match status" value="2"/>
</dbReference>
<dbReference type="InterPro" id="IPR007635">
    <property type="entry name" value="Tis11B_N"/>
</dbReference>
<dbReference type="InterPro" id="IPR045877">
    <property type="entry name" value="ZFP36-like"/>
</dbReference>
<dbReference type="InterPro" id="IPR000571">
    <property type="entry name" value="Znf_CCCH"/>
</dbReference>
<dbReference type="InterPro" id="IPR036855">
    <property type="entry name" value="Znf_CCCH_sf"/>
</dbReference>
<dbReference type="PANTHER" id="PTHR12547">
    <property type="entry name" value="CCCH ZINC FINGER/TIS11-RELATED"/>
    <property type="match status" value="1"/>
</dbReference>
<dbReference type="PANTHER" id="PTHR12547:SF53">
    <property type="entry name" value="MRNA DECAY ACTIVATOR PROTEIN ZFP36L1"/>
    <property type="match status" value="1"/>
</dbReference>
<dbReference type="Pfam" id="PF04553">
    <property type="entry name" value="Tis11B_N"/>
    <property type="match status" value="1"/>
</dbReference>
<dbReference type="Pfam" id="PF00642">
    <property type="entry name" value="zf-CCCH"/>
    <property type="match status" value="2"/>
</dbReference>
<dbReference type="SMART" id="SM00356">
    <property type="entry name" value="ZnF_C3H1"/>
    <property type="match status" value="2"/>
</dbReference>
<dbReference type="SUPFAM" id="SSF90229">
    <property type="entry name" value="CCCH zinc finger"/>
    <property type="match status" value="2"/>
</dbReference>
<dbReference type="PROSITE" id="PS50103">
    <property type="entry name" value="ZF_C3H1"/>
    <property type="match status" value="2"/>
</dbReference>
<comment type="function">
    <text evidence="1 2 6 8 9 11 12 14 15 17">Zinc-finger RNA-binding protein that destabilizes several cytoplasmic AU-rich element (ARE)-containing mRNA transcripts by promoting their poly(A) tail removal or deadenylation, and hence provide a mechanism for attenuating protein synthesis (PubMed:22701344, PubMed:24700863, PubMed:24733888, PubMed:27102483). Acts as a 3'-untranslated region (UTR) ARE mRNA-binding adapter protein to communicate signaling events to the mRNA decay machinery (By similarity). Functions by recruiting the CCR4-NOT deadenylating complex and components of the cytoplasmic RNA decay machinery to the bound ARE-containing mRNAs, and hence promotes ARE-mediated mRNA deadenylation and decay processes (By similarity). Also induces the degradation of ARE-containing mRNAs even in absence of poly(A) tail (By similarity). Binds to 3'-UTR ARE of numerous mRNAs (PubMed:22701344, PubMed:24700863, PubMed:24733888). Positively regulates early adipogenesis by promoting ARE-mediated mRNA decay of immediate early genes (IEGs) (PubMed:22701344). Promotes ARE-mediated mRNA decay of mineralocorticoid receptor NR3C2 mRNA in response to hypertonic stress (PubMed:24700863). Negatively regulates hematopoietic/erythroid cell differentiation by promoting ARE-mediated mRNA decay of the transcription factor STAT5B mRNA (By similarity). Positively regulates monocyte/macrophage cell differentiation by promoting ARE-mediated mRNA decay of the cyclin-dependent kinase CDK6 mRNA (By similarity). Promotes degradation of ARE-containing pluripotency-associated mRNAs in embryonic stem cells (ESCs), such as NANOG, through a fibroblast growth factor (FGF)-induced MAPK-dependent signaling pathway, and hence attenuates ESC self-renewal and positively regulates mesendoderm differentiation (PubMed:24733888). May play a role in mediating pro-apoptotic effects in malignant B-cells by promoting ARE-mediated mRNA decay of BCL2 mRNA (By similarity). In association with ZFP36L2 maintains quiescence on developing B lymphocytes by promoting ARE-mediated decay of several mRNAs encoding cell cycle regulators that help B cells progress through the cell cycle, and hence ensuring accurate variable-diversity-joining (VDJ) recombination and functional immune cell formation (PubMed:27102483). Together with ZFP36L2 is also necessary for thymocyte development and prevention of T-cell acute lymphoblastic leukemia (T-ALL) transformation by promoting ARE-mediated mRNA decay of the oncogenic transcription factor NOTCH1 mRNA (PubMed:20622884). Involved in the delivery of target ARE-mRNAs to processing bodies (PBs) (By similarity). In addition to its cytosolic mRNA-decay function, plays a role in the regulation of nuclear mRNA 3'-end processing; modulates mRNA 3'-end maturation efficiency of the DLL4 mRNA through binding with an ARE embedded in a weak noncanonical polyadenylation (poly(A)) signal in endothelial cells (By similarity). Also involved in the regulation of stress granule (SG) and P-body (PB) formation and fusion (By similarity). Plays a role in vasculogenesis and endocardial development (PubMed:15226444, PubMed:17013884). Involved in the regulation of keratinocyte proliferation, differentiation and apoptosis (By similarity). Plays a role in myoblast cell differentiation (PubMed:17889962).</text>
</comment>
<comment type="subunit">
    <text evidence="2 12">Associates with the cytoplasmic CCR4-NOT deadenylase and RNA exosome complexes to trigger ARE-containing mRNA deadenylation and decay processes. Interacts with CNOT1. Interacts (via N-terminus) with CNOT6. Interacts with CNOT7; this interaction is inhibited in response to phorbol 12-myristate 13-acetate (PMA) treatment in a p38 MAPK-dependent manner. Interacts with DCP1A. Interacts (via N-terminus) with DCP2. Interacts (via N-terminus) with EXOSC2. Interacts with XRN1. Interacts (via phosphorylated form) with YWHAB; this interaction occurs in a protein kinase AKT1-dependent manner (By similarity). Interacts (via phosphorylated form) with YWHAZ; this interaction occurs in a p38 MAPK- and AKT-signaling pathways (PubMed:22701344).</text>
</comment>
<comment type="subcellular location">
    <subcellularLocation>
        <location evidence="5">Nucleus</location>
    </subcellularLocation>
    <subcellularLocation>
        <location evidence="5 14 15">Cytoplasm</location>
    </subcellularLocation>
    <subcellularLocation>
        <location evidence="2">Cytoplasmic granule</location>
    </subcellularLocation>
    <subcellularLocation>
        <location evidence="2">Cytoplasm</location>
        <location evidence="2">P-body</location>
    </subcellularLocation>
    <text evidence="2 5">Shuttles between the nucleus and the cytoplasm in a XPO1/CRM1-dependent manner (PubMed:11796723). Component of cytoplasmic stress granules (By similarity). Localizes in processing bodies (PBs) (By similarity).</text>
</comment>
<comment type="tissue specificity">
    <text evidence="6 7 12 14 15 17">Expressed in preadipocytes and adipocytes (PubMed:22701344). Expressed in the proximal and distal tubules in the renal cortex (at protein level) (PubMed:24700863). Expressed in ovary, heart, kidney, lung, spleen and thymus (PubMed:15226444). Weakly expressed in brain, liver and testis (PubMed:15226444). Expressed in osteoblasts (PubMed:15465005). Expressed in embryonic stem cells (ESCs) (PubMed:24733888). Expressed through B lymphocyte development (PubMed:27102483).</text>
</comment>
<comment type="developmental stage">
    <text evidence="6 8">Expressed in embryos at 8 dpc, onward (PubMed:15226444). Expressed in the allantois and throughout the neuroectoderm and paraxial mesoderm at 8 dpc (PubMed:15226444). Expressed in the chorion and blood vessels at 8.5 dpc (PubMed:17013884). Expressed in the neural tube, paraxial mesoderm, heart, brain, otic vesicle and yolk sac at 9.5 dpc (PubMed:17013884). Expressed in embryonic stem cells (ESC) (PubMed:15226444).</text>
</comment>
<comment type="induction">
    <text evidence="7 9 10 13 14 15 16">Up-regulated during myogenic differentiation in a p38 MAPK-dependent manner (PubMed:17889962). Up-regulated in response to fibroblast growth factor FGF4 in embryonic stem cells (ESCs) in a p38 MAPK-dependent manner (PubMed:24733888). Up-regulated during high sodium diet-fed in the renal tubules (PubMed:24700863). Up-regulated upon hypertonic stress condition with raffinose (at protein level) (PubMed:24700863). Up-regulated by parathyroid hormone (PTH) in calvarial osteoblasts (PubMed:15465005). Up-regulated in response to adrenocorticotropic hormone (ACTH) (PubMed:19179481). Up-regulated in response to cAMP (PubMed:19179481). Down-regulated by bone morphogenetic protein BMP2 treatment in calvarial osteoblasts (PubMed:15465005). Down-regulated during the conversion from quiescence to activated satellite cells upon muscle injury (PubMed:23046558, PubMed:25815583).</text>
</comment>
<comment type="PTM">
    <text evidence="2 10 12">Phosphorylated (PubMed:19179481). Phosphorylated by RPS6KA1 at Ser-334 upon phorbol 12-myristate 13-acetate (PMA) treatment; this phosphorylation results in dissociation of the CCR4-NOT deadenylase complex and induces p38 MAPK-mediated stabilization of the low-density lipoprotein receptor LDLR mRNA. Phosphorylated by protein kinase AKT1 at Ser-92 and Ser-203 in response to insulin; these phosphorylations stabilize ZFP36L1, increase the association with 14-3-3 proteins and mediate ARE-containing mRNA stabilization. AKT1-mediated phosphorylation at Ser-92 does not impair ARE-containing RNA-binding. Phosphorylated at Ser-54, Ser-92 and Ser-203 by MAPKAPK2; these phosphorylations increase the association with 14-3-3 proteins and mediate ARE-containing mRNA stabilization in a protein kinase AKT1-independent manner. MAPKAPK2-mediated phosphorylations at Ser-54, Ser-92 and Ser-203 do not impair ARE-containing RNA-binding (By similarity). Phosphorylations increase the association with 14-3-3 proteins and mediate ARE-containing mRNA stabilization during early adipogenesis in a p38 MAPK- and AKT-dependent manner (PubMed:22701344).</text>
</comment>
<comment type="PTM">
    <text evidence="2">Ubiquitinated. Ubiquitination leads to proteasomal degradation, a process inhibited by phosphorylations at Ser-90, Ser-92 and Ser-203.</text>
</comment>
<comment type="disruption phenotype">
    <text evidence="6 8 11 17">Embryos die in utero at 11 dpc (PubMed:15226444, PubMed:17013884). Exhibit extraembryonic, intraembryonic, vascular and neural tube defects and cardiac abnormalities at 9.5 dpc (PubMed:17013884). Show a reduced number of circulating blood cells (PubMed:17013884). Show failure of chorioallantoic fusion (PubMed:15226444). Exhibited increased level of VEGFA protein level in embryonic fibroblasts under both normoxic and hypoxic conditions (PubMed:17013884). Knockout mice lacking both ZFP36L1 and ZFP36L2 during thymopoiesis lead to aberrant T cell development and subsequently develop a T-cell acute lymphoblastic leukemia (T-ALL) (PubMed:20622884). Show also higher levels of NOTCH1 protein and mRNA in thymocytes (PubMed:20622884). Conditional knockout mice of both ZFP36L1 and ZFP36L2 in pro-B cells display reduced B lymphocyte number and delayed variable-diversity-joining (VDJ) recombination (PubMed:27102483). Exhibit also increased protein and ARE-containing mRNA expressions of several factors implicated in cell cycle progression in late pre-B cells (PubMed:27102483).</text>
</comment>